<organism>
    <name type="scientific">Syntrophus aciditrophicus (strain SB)</name>
    <dbReference type="NCBI Taxonomy" id="56780"/>
    <lineage>
        <taxon>Bacteria</taxon>
        <taxon>Pseudomonadati</taxon>
        <taxon>Thermodesulfobacteriota</taxon>
        <taxon>Syntrophia</taxon>
        <taxon>Syntrophales</taxon>
        <taxon>Syntrophaceae</taxon>
        <taxon>Syntrophus</taxon>
    </lineage>
</organism>
<dbReference type="EMBL" id="CP000252">
    <property type="protein sequence ID" value="ABC77896.1"/>
    <property type="molecule type" value="Genomic_DNA"/>
</dbReference>
<dbReference type="RefSeq" id="WP_011417917.1">
    <property type="nucleotide sequence ID" value="NC_007759.1"/>
</dbReference>
<dbReference type="SMR" id="Q2LUY2"/>
<dbReference type="FunCoup" id="Q2LUY2">
    <property type="interactions" value="32"/>
</dbReference>
<dbReference type="STRING" id="56780.SYN_00477"/>
<dbReference type="KEGG" id="sat:SYN_00477"/>
<dbReference type="eggNOG" id="COG0864">
    <property type="taxonomic scope" value="Bacteria"/>
</dbReference>
<dbReference type="HOGENOM" id="CLU_113319_1_2_7"/>
<dbReference type="InParanoid" id="Q2LUY2"/>
<dbReference type="OrthoDB" id="9806294at2"/>
<dbReference type="Proteomes" id="UP000001933">
    <property type="component" value="Chromosome"/>
</dbReference>
<dbReference type="GO" id="GO:0003677">
    <property type="term" value="F:DNA binding"/>
    <property type="evidence" value="ECO:0007669"/>
    <property type="project" value="UniProtKB-KW"/>
</dbReference>
<dbReference type="GO" id="GO:0003700">
    <property type="term" value="F:DNA-binding transcription factor activity"/>
    <property type="evidence" value="ECO:0007669"/>
    <property type="project" value="UniProtKB-UniRule"/>
</dbReference>
<dbReference type="GO" id="GO:0016151">
    <property type="term" value="F:nickel cation binding"/>
    <property type="evidence" value="ECO:0007669"/>
    <property type="project" value="UniProtKB-UniRule"/>
</dbReference>
<dbReference type="GO" id="GO:0010045">
    <property type="term" value="P:response to nickel cation"/>
    <property type="evidence" value="ECO:0007669"/>
    <property type="project" value="InterPro"/>
</dbReference>
<dbReference type="CDD" id="cd22231">
    <property type="entry name" value="RHH_NikR_HicB-like"/>
    <property type="match status" value="1"/>
</dbReference>
<dbReference type="Gene3D" id="3.30.70.1150">
    <property type="entry name" value="ACT-like. Chain A, domain 2"/>
    <property type="match status" value="1"/>
</dbReference>
<dbReference type="Gene3D" id="1.10.1220.10">
    <property type="entry name" value="Met repressor-like"/>
    <property type="match status" value="1"/>
</dbReference>
<dbReference type="HAMAP" id="MF_00476">
    <property type="entry name" value="NikR"/>
    <property type="match status" value="1"/>
</dbReference>
<dbReference type="InterPro" id="IPR027271">
    <property type="entry name" value="Acetolactate_synth/TF_NikR_C"/>
</dbReference>
<dbReference type="InterPro" id="IPR045865">
    <property type="entry name" value="ACT-like_dom_sf"/>
</dbReference>
<dbReference type="InterPro" id="IPR013321">
    <property type="entry name" value="Arc_rbn_hlx_hlx"/>
</dbReference>
<dbReference type="InterPro" id="IPR002145">
    <property type="entry name" value="CopG"/>
</dbReference>
<dbReference type="InterPro" id="IPR050192">
    <property type="entry name" value="CopG/NikR_regulator"/>
</dbReference>
<dbReference type="InterPro" id="IPR022988">
    <property type="entry name" value="Ni_resp_reg_NikR"/>
</dbReference>
<dbReference type="InterPro" id="IPR010985">
    <property type="entry name" value="Ribbon_hlx_hlx"/>
</dbReference>
<dbReference type="InterPro" id="IPR014864">
    <property type="entry name" value="TF_NikR_Ni-bd_C"/>
</dbReference>
<dbReference type="NCBIfam" id="NF001884">
    <property type="entry name" value="PRK00630.1"/>
    <property type="match status" value="1"/>
</dbReference>
<dbReference type="NCBIfam" id="NF002169">
    <property type="entry name" value="PRK01002.1"/>
    <property type="match status" value="1"/>
</dbReference>
<dbReference type="NCBIfam" id="NF002815">
    <property type="entry name" value="PRK02967.1"/>
    <property type="match status" value="1"/>
</dbReference>
<dbReference type="NCBIfam" id="NF003381">
    <property type="entry name" value="PRK04460.1"/>
    <property type="match status" value="1"/>
</dbReference>
<dbReference type="PANTHER" id="PTHR34719">
    <property type="entry name" value="NICKEL-RESPONSIVE REGULATOR"/>
    <property type="match status" value="1"/>
</dbReference>
<dbReference type="PANTHER" id="PTHR34719:SF2">
    <property type="entry name" value="NICKEL-RESPONSIVE REGULATOR"/>
    <property type="match status" value="1"/>
</dbReference>
<dbReference type="Pfam" id="PF08753">
    <property type="entry name" value="NikR_C"/>
    <property type="match status" value="1"/>
</dbReference>
<dbReference type="Pfam" id="PF01402">
    <property type="entry name" value="RHH_1"/>
    <property type="match status" value="1"/>
</dbReference>
<dbReference type="SUPFAM" id="SSF55021">
    <property type="entry name" value="ACT-like"/>
    <property type="match status" value="1"/>
</dbReference>
<dbReference type="SUPFAM" id="SSF47598">
    <property type="entry name" value="Ribbon-helix-helix"/>
    <property type="match status" value="1"/>
</dbReference>
<protein>
    <recommendedName>
        <fullName evidence="1">Putative nickel-responsive regulator</fullName>
    </recommendedName>
</protein>
<evidence type="ECO:0000255" key="1">
    <source>
        <dbReference type="HAMAP-Rule" id="MF_00476"/>
    </source>
</evidence>
<proteinExistence type="inferred from homology"/>
<feature type="chain" id="PRO_1000014084" description="Putative nickel-responsive regulator">
    <location>
        <begin position="1"/>
        <end position="137"/>
    </location>
</feature>
<feature type="binding site" evidence="1">
    <location>
        <position position="78"/>
    </location>
    <ligand>
        <name>Ni(2+)</name>
        <dbReference type="ChEBI" id="CHEBI:49786"/>
    </ligand>
</feature>
<feature type="binding site" evidence="1">
    <location>
        <position position="89"/>
    </location>
    <ligand>
        <name>Ni(2+)</name>
        <dbReference type="ChEBI" id="CHEBI:49786"/>
    </ligand>
</feature>
<feature type="binding site" evidence="1">
    <location>
        <position position="91"/>
    </location>
    <ligand>
        <name>Ni(2+)</name>
        <dbReference type="ChEBI" id="CHEBI:49786"/>
    </ligand>
</feature>
<feature type="binding site" evidence="1">
    <location>
        <position position="97"/>
    </location>
    <ligand>
        <name>Ni(2+)</name>
        <dbReference type="ChEBI" id="CHEBI:49786"/>
    </ligand>
</feature>
<sequence>MSDIVRFGVSLDNTLLKQFDRFIKDRNYTNRSEAIRDLIRQELLKKEWTEDQEVAGAITYIYDHHQRDLLNKIIDIQHDFHDVIKSTQHIHLDHDNCLEIVAVKGNPTTISKLSNALKAIKGVRHGSLSISGVGQIA</sequence>
<keyword id="KW-0238">DNA-binding</keyword>
<keyword id="KW-0479">Metal-binding</keyword>
<keyword id="KW-0533">Nickel</keyword>
<keyword id="KW-1185">Reference proteome</keyword>
<keyword id="KW-0804">Transcription</keyword>
<keyword id="KW-0805">Transcription regulation</keyword>
<name>NIKR_SYNAS</name>
<comment type="function">
    <text evidence="1">Transcriptional regulator.</text>
</comment>
<comment type="cofactor">
    <cofactor evidence="1">
        <name>Ni(2+)</name>
        <dbReference type="ChEBI" id="CHEBI:49786"/>
    </cofactor>
    <text evidence="1">Binds 1 nickel ion per subunit.</text>
</comment>
<comment type="similarity">
    <text evidence="1">Belongs to the transcriptional regulatory CopG/NikR family.</text>
</comment>
<reference key="1">
    <citation type="journal article" date="2007" name="Proc. Natl. Acad. Sci. U.S.A.">
        <title>The genome of Syntrophus aciditrophicus: life at the thermodynamic limit of microbial growth.</title>
        <authorList>
            <person name="McInerney M.J."/>
            <person name="Rohlin L."/>
            <person name="Mouttaki H."/>
            <person name="Kim U."/>
            <person name="Krupp R.S."/>
            <person name="Rios-Hernandez L."/>
            <person name="Sieber J."/>
            <person name="Struchtemeyer C.G."/>
            <person name="Bhattacharyya A."/>
            <person name="Campbell J.W."/>
            <person name="Gunsalus R.P."/>
        </authorList>
    </citation>
    <scope>NUCLEOTIDE SEQUENCE [LARGE SCALE GENOMIC DNA]</scope>
    <source>
        <strain>SB</strain>
    </source>
</reference>
<accession>Q2LUY2</accession>
<gene>
    <name type="ordered locus">SYNAS_20170</name>
    <name type="ORF">SYN_00477</name>
</gene>